<sequence>MRALALDIGLKRIGVALCVDKKIALPLDAVLRKNRNQAANEIKNLLKIHEISLLIVGIPKGGSSEEEMTRRIKHFVSLLEFDKEICFVDESGTSKKALEYGIANTRKKDGKLDSLAAFIMIKDYFCSLE</sequence>
<dbReference type="EC" id="3.1.-.-" evidence="1"/>
<dbReference type="EMBL" id="CP000768">
    <property type="protein sequence ID" value="ABS43581.1"/>
    <property type="molecule type" value="Genomic_DNA"/>
</dbReference>
<dbReference type="SMR" id="A7H4H6"/>
<dbReference type="KEGG" id="cjd:JJD26997_1364"/>
<dbReference type="HOGENOM" id="CLU_098240_2_2_7"/>
<dbReference type="Proteomes" id="UP000002302">
    <property type="component" value="Chromosome"/>
</dbReference>
<dbReference type="GO" id="GO:0005829">
    <property type="term" value="C:cytosol"/>
    <property type="evidence" value="ECO:0007669"/>
    <property type="project" value="TreeGrafter"/>
</dbReference>
<dbReference type="GO" id="GO:0004518">
    <property type="term" value="F:nuclease activity"/>
    <property type="evidence" value="ECO:0007669"/>
    <property type="project" value="UniProtKB-KW"/>
</dbReference>
<dbReference type="GO" id="GO:0000967">
    <property type="term" value="P:rRNA 5'-end processing"/>
    <property type="evidence" value="ECO:0007669"/>
    <property type="project" value="UniProtKB-UniRule"/>
</dbReference>
<dbReference type="CDD" id="cd16964">
    <property type="entry name" value="YqgF"/>
    <property type="match status" value="1"/>
</dbReference>
<dbReference type="Gene3D" id="3.30.420.140">
    <property type="entry name" value="YqgF/RNase H-like domain"/>
    <property type="match status" value="1"/>
</dbReference>
<dbReference type="HAMAP" id="MF_00651">
    <property type="entry name" value="Nuclease_YqgF"/>
    <property type="match status" value="1"/>
</dbReference>
<dbReference type="InterPro" id="IPR012337">
    <property type="entry name" value="RNaseH-like_sf"/>
</dbReference>
<dbReference type="InterPro" id="IPR005227">
    <property type="entry name" value="YqgF"/>
</dbReference>
<dbReference type="InterPro" id="IPR006641">
    <property type="entry name" value="YqgF/RNaseH-like_dom"/>
</dbReference>
<dbReference type="InterPro" id="IPR037027">
    <property type="entry name" value="YqgF/RNaseH-like_dom_sf"/>
</dbReference>
<dbReference type="NCBIfam" id="NF001026">
    <property type="entry name" value="PRK00109.2-2"/>
    <property type="match status" value="1"/>
</dbReference>
<dbReference type="NCBIfam" id="TIGR00250">
    <property type="entry name" value="RNAse_H_YqgF"/>
    <property type="match status" value="1"/>
</dbReference>
<dbReference type="PANTHER" id="PTHR33317">
    <property type="entry name" value="POLYNUCLEOTIDYL TRANSFERASE, RIBONUCLEASE H-LIKE SUPERFAMILY PROTEIN"/>
    <property type="match status" value="1"/>
</dbReference>
<dbReference type="PANTHER" id="PTHR33317:SF4">
    <property type="entry name" value="POLYNUCLEOTIDYL TRANSFERASE, RIBONUCLEASE H-LIKE SUPERFAMILY PROTEIN"/>
    <property type="match status" value="1"/>
</dbReference>
<dbReference type="Pfam" id="PF03652">
    <property type="entry name" value="RuvX"/>
    <property type="match status" value="1"/>
</dbReference>
<dbReference type="SMART" id="SM00732">
    <property type="entry name" value="YqgFc"/>
    <property type="match status" value="1"/>
</dbReference>
<dbReference type="SUPFAM" id="SSF53098">
    <property type="entry name" value="Ribonuclease H-like"/>
    <property type="match status" value="1"/>
</dbReference>
<keyword id="KW-0963">Cytoplasm</keyword>
<keyword id="KW-0378">Hydrolase</keyword>
<keyword id="KW-0540">Nuclease</keyword>
<keyword id="KW-0690">Ribosome biogenesis</keyword>
<gene>
    <name type="ordered locus">JJD26997_1364</name>
</gene>
<proteinExistence type="inferred from homology"/>
<name>YQGF_CAMJD</name>
<protein>
    <recommendedName>
        <fullName evidence="1">Putative pre-16S rRNA nuclease</fullName>
        <ecNumber evidence="1">3.1.-.-</ecNumber>
    </recommendedName>
</protein>
<evidence type="ECO:0000255" key="1">
    <source>
        <dbReference type="HAMAP-Rule" id="MF_00651"/>
    </source>
</evidence>
<accession>A7H4H6</accession>
<organism>
    <name type="scientific">Campylobacter jejuni subsp. doylei (strain ATCC BAA-1458 / RM4099 / 269.97)</name>
    <dbReference type="NCBI Taxonomy" id="360109"/>
    <lineage>
        <taxon>Bacteria</taxon>
        <taxon>Pseudomonadati</taxon>
        <taxon>Campylobacterota</taxon>
        <taxon>Epsilonproteobacteria</taxon>
        <taxon>Campylobacterales</taxon>
        <taxon>Campylobacteraceae</taxon>
        <taxon>Campylobacter</taxon>
    </lineage>
</organism>
<comment type="function">
    <text evidence="1">Could be a nuclease involved in processing of the 5'-end of pre-16S rRNA.</text>
</comment>
<comment type="subcellular location">
    <subcellularLocation>
        <location evidence="1">Cytoplasm</location>
    </subcellularLocation>
</comment>
<comment type="similarity">
    <text evidence="1">Belongs to the YqgF nuclease family.</text>
</comment>
<reference key="1">
    <citation type="submission" date="2007-07" db="EMBL/GenBank/DDBJ databases">
        <title>Complete genome sequence of Campylobacter jejuni subsp doylei 269.97 isolated from human blood.</title>
        <authorList>
            <person name="Fouts D.E."/>
            <person name="Mongodin E.F."/>
            <person name="Puiu D."/>
            <person name="Sebastian Y."/>
            <person name="Miller W.G."/>
            <person name="Mandrell R.E."/>
            <person name="Lastovica A.J."/>
            <person name="Nelson K.E."/>
        </authorList>
    </citation>
    <scope>NUCLEOTIDE SEQUENCE [LARGE SCALE GENOMIC DNA]</scope>
    <source>
        <strain>ATCC BAA-1458 / RM4099 / 269.97</strain>
    </source>
</reference>
<feature type="chain" id="PRO_1000061500" description="Putative pre-16S rRNA nuclease">
    <location>
        <begin position="1"/>
        <end position="129"/>
    </location>
</feature>